<proteinExistence type="inferred from homology"/>
<accession>Q9S0L2</accession>
<accession>D4ZF05</accession>
<gene>
    <name type="primary">rpoN</name>
    <name type="ordered locus">SVI_0414</name>
</gene>
<dbReference type="EMBL" id="AB033988">
    <property type="protein sequence ID" value="BAA85885.1"/>
    <property type="molecule type" value="Genomic_DNA"/>
</dbReference>
<dbReference type="EMBL" id="AP011177">
    <property type="protein sequence ID" value="BAJ00385.1"/>
    <property type="molecule type" value="Genomic_DNA"/>
</dbReference>
<dbReference type="RefSeq" id="WP_013049699.1">
    <property type="nucleotide sequence ID" value="NC_014012.1"/>
</dbReference>
<dbReference type="SMR" id="Q9S0L2"/>
<dbReference type="STRING" id="637905.SVI_0414"/>
<dbReference type="KEGG" id="svo:SVI_0414"/>
<dbReference type="eggNOG" id="COG1508">
    <property type="taxonomic scope" value="Bacteria"/>
</dbReference>
<dbReference type="HOGENOM" id="CLU_020569_0_1_6"/>
<dbReference type="OrthoDB" id="9814402at2"/>
<dbReference type="Proteomes" id="UP000002350">
    <property type="component" value="Chromosome"/>
</dbReference>
<dbReference type="GO" id="GO:0000428">
    <property type="term" value="C:DNA-directed RNA polymerase complex"/>
    <property type="evidence" value="ECO:0007669"/>
    <property type="project" value="UniProtKB-KW"/>
</dbReference>
<dbReference type="GO" id="GO:0003677">
    <property type="term" value="F:DNA binding"/>
    <property type="evidence" value="ECO:0007669"/>
    <property type="project" value="UniProtKB-KW"/>
</dbReference>
<dbReference type="GO" id="GO:0001216">
    <property type="term" value="F:DNA-binding transcription activator activity"/>
    <property type="evidence" value="ECO:0007669"/>
    <property type="project" value="InterPro"/>
</dbReference>
<dbReference type="GO" id="GO:0016779">
    <property type="term" value="F:nucleotidyltransferase activity"/>
    <property type="evidence" value="ECO:0007669"/>
    <property type="project" value="UniProtKB-KW"/>
</dbReference>
<dbReference type="GO" id="GO:0016987">
    <property type="term" value="F:sigma factor activity"/>
    <property type="evidence" value="ECO:0007669"/>
    <property type="project" value="UniProtKB-KW"/>
</dbReference>
<dbReference type="GO" id="GO:0006352">
    <property type="term" value="P:DNA-templated transcription initiation"/>
    <property type="evidence" value="ECO:0007669"/>
    <property type="project" value="InterPro"/>
</dbReference>
<dbReference type="FunFam" id="1.10.10.1330:FF:000001">
    <property type="entry name" value="RNA polymerase sigma-54 factor"/>
    <property type="match status" value="1"/>
</dbReference>
<dbReference type="FunFam" id="1.10.10.60:FF:000045">
    <property type="entry name" value="RNA polymerase sigma-54 factor"/>
    <property type="match status" value="1"/>
</dbReference>
<dbReference type="Gene3D" id="1.10.10.60">
    <property type="entry name" value="Homeodomain-like"/>
    <property type="match status" value="1"/>
</dbReference>
<dbReference type="Gene3D" id="1.10.10.1330">
    <property type="entry name" value="RNA polymerase sigma-54 factor, core-binding domain"/>
    <property type="match status" value="1"/>
</dbReference>
<dbReference type="InterPro" id="IPR000394">
    <property type="entry name" value="RNA_pol_sigma_54"/>
</dbReference>
<dbReference type="InterPro" id="IPR007046">
    <property type="entry name" value="RNA_pol_sigma_54_core-bd"/>
</dbReference>
<dbReference type="InterPro" id="IPR007634">
    <property type="entry name" value="RNA_pol_sigma_54_DNA-bd"/>
</dbReference>
<dbReference type="InterPro" id="IPR038709">
    <property type="entry name" value="RpoN_core-bd_sf"/>
</dbReference>
<dbReference type="NCBIfam" id="NF004595">
    <property type="entry name" value="PRK05932.1-2"/>
    <property type="match status" value="1"/>
</dbReference>
<dbReference type="NCBIfam" id="NF009118">
    <property type="entry name" value="PRK12469.1"/>
    <property type="match status" value="1"/>
</dbReference>
<dbReference type="NCBIfam" id="TIGR02395">
    <property type="entry name" value="rpoN_sigma"/>
    <property type="match status" value="1"/>
</dbReference>
<dbReference type="PANTHER" id="PTHR32248">
    <property type="entry name" value="RNA POLYMERASE SIGMA-54 FACTOR"/>
    <property type="match status" value="1"/>
</dbReference>
<dbReference type="PANTHER" id="PTHR32248:SF4">
    <property type="entry name" value="RNA POLYMERASE SIGMA-54 FACTOR"/>
    <property type="match status" value="1"/>
</dbReference>
<dbReference type="Pfam" id="PF00309">
    <property type="entry name" value="Sigma54_AID"/>
    <property type="match status" value="1"/>
</dbReference>
<dbReference type="Pfam" id="PF04963">
    <property type="entry name" value="Sigma54_CBD"/>
    <property type="match status" value="1"/>
</dbReference>
<dbReference type="Pfam" id="PF04552">
    <property type="entry name" value="Sigma54_DBD"/>
    <property type="match status" value="1"/>
</dbReference>
<dbReference type="PIRSF" id="PIRSF000774">
    <property type="entry name" value="RpoN"/>
    <property type="match status" value="1"/>
</dbReference>
<dbReference type="PRINTS" id="PR00045">
    <property type="entry name" value="SIGMA54FCT"/>
</dbReference>
<dbReference type="PROSITE" id="PS00717">
    <property type="entry name" value="SIGMA54_1"/>
    <property type="match status" value="1"/>
</dbReference>
<dbReference type="PROSITE" id="PS00718">
    <property type="entry name" value="SIGMA54_2"/>
    <property type="match status" value="1"/>
</dbReference>
<dbReference type="PROSITE" id="PS50044">
    <property type="entry name" value="SIGMA54_3"/>
    <property type="match status" value="1"/>
</dbReference>
<evidence type="ECO:0000250" key="1"/>
<evidence type="ECO:0000256" key="2">
    <source>
        <dbReference type="SAM" id="MobiDB-lite"/>
    </source>
</evidence>
<evidence type="ECO:0000305" key="3"/>
<comment type="function">
    <text>Sigma factors are initiation factors that promote the attachment of RNA polymerase to specific initiation sites and are then released. This sigma factor recognizes a DNA element, designated as region A upstream of the pressure-regulated operon.</text>
</comment>
<comment type="similarity">
    <text evidence="3">Belongs to the sigma-54 factor family.</text>
</comment>
<name>RP54_SHEVD</name>
<sequence>MKASLQLKMGQQLTMTPQLQQAIRLLQLSSLELQQEIQQALDSNPLLELDEEQVDPPVNGEDKTVDTEDFSATAESDGPIDNSAVETSEAITRDSMPEELPMDTTWDEVYTASPNSTSGAMRDDDMPFQGETSEGLYEHLEWQKNLTPFSDNDLAIATAIIEAIDERGYLTQSIEDILEAMGDPEIEQDEIEAVLKRIQHFDPIGIAARDLSECLLIQLAQYADTTPHIDNARILIRDHLDLIAGRDFRLLMRKTKLKEDALRDAIELIQTLNPRPGLAVTPGKDEYVIPDVTVTKKKGRWMVELNPDNMPKISVNQHYASMAKSTKSQADSQFIRGHLQEAKWFIKSLESRNETLLKVSKCIVKFQQGFFEFGEEAMKPMVLNDIAEAVEMHESTISRVTTQKYMHTPRGIFELKYFFSSHVATDDGGECSSTAIRAFIKKLVAAENQQKPLSDSKMALLLADQGIKVARRTIAKYREAMLIPPSNQRKSL</sequence>
<reference key="1">
    <citation type="journal article" date="2000" name="Biochim. Biophys. Acta">
        <title>Cloning and characterization of the gene encoding RNA polymerase sigma factor 54 of deep-sea piezophilic Shewanella violacea.</title>
        <authorList>
            <person name="Ikegami A."/>
            <person name="Nakasone K."/>
            <person name="Fujita M."/>
            <person name="Fujii S."/>
            <person name="Kato C."/>
            <person name="Usami R."/>
            <person name="Horikoshi K."/>
        </authorList>
    </citation>
    <scope>NUCLEOTIDE SEQUENCE [GENOMIC DNA]</scope>
</reference>
<reference key="2">
    <citation type="journal article" date="2010" name="Mol. Biosyst.">
        <title>Complete genome sequence and comparative analysis of Shewanella violacea, a psychrophilic and piezophilic bacterium from deep sea floor sediments.</title>
        <authorList>
            <person name="Aono E."/>
            <person name="Baba T."/>
            <person name="Ara T."/>
            <person name="Nishi T."/>
            <person name="Nakamichi T."/>
            <person name="Inamoto E."/>
            <person name="Toyonaga H."/>
            <person name="Hasegawa M."/>
            <person name="Takai Y."/>
            <person name="Okumura Y."/>
            <person name="Baba M."/>
            <person name="Tomita M."/>
            <person name="Kato C."/>
            <person name="Oshima T."/>
            <person name="Nakasone K."/>
            <person name="Mori H."/>
        </authorList>
    </citation>
    <scope>NUCLEOTIDE SEQUENCE [LARGE SCALE GENOMIC DNA]</scope>
    <source>
        <strain>JCM 10179 / CIP 106290 / LMG 19151 / DSS12</strain>
    </source>
</reference>
<organism>
    <name type="scientific">Shewanella violacea (strain JCM 10179 / CIP 106290 / LMG 19151 / DSS12)</name>
    <dbReference type="NCBI Taxonomy" id="637905"/>
    <lineage>
        <taxon>Bacteria</taxon>
        <taxon>Pseudomonadati</taxon>
        <taxon>Pseudomonadota</taxon>
        <taxon>Gammaproteobacteria</taxon>
        <taxon>Alteromonadales</taxon>
        <taxon>Shewanellaceae</taxon>
        <taxon>Shewanella</taxon>
    </lineage>
</organism>
<keyword id="KW-0238">DNA-binding</keyword>
<keyword id="KW-0240">DNA-directed RNA polymerase</keyword>
<keyword id="KW-0548">Nucleotidyltransferase</keyword>
<keyword id="KW-1185">Reference proteome</keyword>
<keyword id="KW-0731">Sigma factor</keyword>
<keyword id="KW-0804">Transcription</keyword>
<keyword id="KW-0805">Transcription regulation</keyword>
<keyword id="KW-0808">Transferase</keyword>
<protein>
    <recommendedName>
        <fullName>RNA polymerase sigma-54 factor</fullName>
    </recommendedName>
</protein>
<feature type="chain" id="PRO_0000205543" description="RNA polymerase sigma-54 factor">
    <location>
        <begin position="1"/>
        <end position="492"/>
    </location>
</feature>
<feature type="DNA-binding region" description="H-T-H motif" evidence="1">
    <location>
        <begin position="382"/>
        <end position="401"/>
    </location>
</feature>
<feature type="region of interest" description="Disordered" evidence="2">
    <location>
        <begin position="54"/>
        <end position="92"/>
    </location>
</feature>
<feature type="short sequence motif" description="RPON box">
    <location>
        <begin position="470"/>
        <end position="478"/>
    </location>
</feature>